<dbReference type="EC" id="2.1.1.77" evidence="1"/>
<dbReference type="EMBL" id="CP000613">
    <property type="protein sequence ID" value="ACI98459.1"/>
    <property type="molecule type" value="Genomic_DNA"/>
</dbReference>
<dbReference type="RefSeq" id="WP_012566248.1">
    <property type="nucleotide sequence ID" value="NC_011420.2"/>
</dbReference>
<dbReference type="SMR" id="B6ISM3"/>
<dbReference type="STRING" id="414684.RC1_1036"/>
<dbReference type="KEGG" id="rce:RC1_1036"/>
<dbReference type="eggNOG" id="COG2518">
    <property type="taxonomic scope" value="Bacteria"/>
</dbReference>
<dbReference type="HOGENOM" id="CLU_055432_2_0_5"/>
<dbReference type="OrthoDB" id="9810066at2"/>
<dbReference type="Proteomes" id="UP000001591">
    <property type="component" value="Chromosome"/>
</dbReference>
<dbReference type="GO" id="GO:0005737">
    <property type="term" value="C:cytoplasm"/>
    <property type="evidence" value="ECO:0007669"/>
    <property type="project" value="UniProtKB-SubCell"/>
</dbReference>
<dbReference type="GO" id="GO:0004719">
    <property type="term" value="F:protein-L-isoaspartate (D-aspartate) O-methyltransferase activity"/>
    <property type="evidence" value="ECO:0007669"/>
    <property type="project" value="UniProtKB-UniRule"/>
</dbReference>
<dbReference type="GO" id="GO:0032259">
    <property type="term" value="P:methylation"/>
    <property type="evidence" value="ECO:0007669"/>
    <property type="project" value="UniProtKB-KW"/>
</dbReference>
<dbReference type="GO" id="GO:0036211">
    <property type="term" value="P:protein modification process"/>
    <property type="evidence" value="ECO:0007669"/>
    <property type="project" value="UniProtKB-UniRule"/>
</dbReference>
<dbReference type="GO" id="GO:0030091">
    <property type="term" value="P:protein repair"/>
    <property type="evidence" value="ECO:0007669"/>
    <property type="project" value="UniProtKB-UniRule"/>
</dbReference>
<dbReference type="CDD" id="cd02440">
    <property type="entry name" value="AdoMet_MTases"/>
    <property type="match status" value="1"/>
</dbReference>
<dbReference type="FunFam" id="3.40.50.150:FF:000010">
    <property type="entry name" value="Protein-L-isoaspartate O-methyltransferase"/>
    <property type="match status" value="1"/>
</dbReference>
<dbReference type="Gene3D" id="3.40.50.150">
    <property type="entry name" value="Vaccinia Virus protein VP39"/>
    <property type="match status" value="1"/>
</dbReference>
<dbReference type="HAMAP" id="MF_00090">
    <property type="entry name" value="PIMT"/>
    <property type="match status" value="1"/>
</dbReference>
<dbReference type="InterPro" id="IPR000682">
    <property type="entry name" value="PCMT"/>
</dbReference>
<dbReference type="InterPro" id="IPR029063">
    <property type="entry name" value="SAM-dependent_MTases_sf"/>
</dbReference>
<dbReference type="NCBIfam" id="TIGR00080">
    <property type="entry name" value="pimt"/>
    <property type="match status" value="1"/>
</dbReference>
<dbReference type="NCBIfam" id="NF001453">
    <property type="entry name" value="PRK00312.1"/>
    <property type="match status" value="1"/>
</dbReference>
<dbReference type="PANTHER" id="PTHR11579">
    <property type="entry name" value="PROTEIN-L-ISOASPARTATE O-METHYLTRANSFERASE"/>
    <property type="match status" value="1"/>
</dbReference>
<dbReference type="PANTHER" id="PTHR11579:SF0">
    <property type="entry name" value="PROTEIN-L-ISOASPARTATE(D-ASPARTATE) O-METHYLTRANSFERASE"/>
    <property type="match status" value="1"/>
</dbReference>
<dbReference type="Pfam" id="PF01135">
    <property type="entry name" value="PCMT"/>
    <property type="match status" value="1"/>
</dbReference>
<dbReference type="SUPFAM" id="SSF53335">
    <property type="entry name" value="S-adenosyl-L-methionine-dependent methyltransferases"/>
    <property type="match status" value="1"/>
</dbReference>
<dbReference type="PROSITE" id="PS01279">
    <property type="entry name" value="PCMT"/>
    <property type="match status" value="1"/>
</dbReference>
<evidence type="ECO:0000255" key="1">
    <source>
        <dbReference type="HAMAP-Rule" id="MF_00090"/>
    </source>
</evidence>
<reference key="1">
    <citation type="submission" date="2007-03" db="EMBL/GenBank/DDBJ databases">
        <title>Genome sequence of Rhodospirillum centenum.</title>
        <authorList>
            <person name="Touchman J.W."/>
            <person name="Bauer C."/>
            <person name="Blankenship R.E."/>
        </authorList>
    </citation>
    <scope>NUCLEOTIDE SEQUENCE [LARGE SCALE GENOMIC DNA]</scope>
    <source>
        <strain>ATCC 51521 / SW</strain>
    </source>
</reference>
<comment type="function">
    <text evidence="1">Catalyzes the methyl esterification of L-isoaspartyl residues in peptides and proteins that result from spontaneous decomposition of normal L-aspartyl and L-asparaginyl residues. It plays a role in the repair and/or degradation of damaged proteins.</text>
</comment>
<comment type="catalytic activity">
    <reaction evidence="1">
        <text>[protein]-L-isoaspartate + S-adenosyl-L-methionine = [protein]-L-isoaspartate alpha-methyl ester + S-adenosyl-L-homocysteine</text>
        <dbReference type="Rhea" id="RHEA:12705"/>
        <dbReference type="Rhea" id="RHEA-COMP:12143"/>
        <dbReference type="Rhea" id="RHEA-COMP:12144"/>
        <dbReference type="ChEBI" id="CHEBI:57856"/>
        <dbReference type="ChEBI" id="CHEBI:59789"/>
        <dbReference type="ChEBI" id="CHEBI:90596"/>
        <dbReference type="ChEBI" id="CHEBI:90598"/>
        <dbReference type="EC" id="2.1.1.77"/>
    </reaction>
</comment>
<comment type="subcellular location">
    <subcellularLocation>
        <location evidence="1">Cytoplasm</location>
    </subcellularLocation>
</comment>
<comment type="similarity">
    <text evidence="1">Belongs to the methyltransferase superfamily. L-isoaspartyl/D-aspartyl protein methyltransferase family.</text>
</comment>
<accession>B6ISM3</accession>
<gene>
    <name evidence="1" type="primary">pcm</name>
    <name type="ordered locus">RC1_1036</name>
</gene>
<proteinExistence type="inferred from homology"/>
<feature type="chain" id="PRO_1000093270" description="Protein-L-isoaspartate O-methyltransferase">
    <location>
        <begin position="1"/>
        <end position="221"/>
    </location>
</feature>
<feature type="active site" evidence="1">
    <location>
        <position position="60"/>
    </location>
</feature>
<organism>
    <name type="scientific">Rhodospirillum centenum (strain ATCC 51521 / SW)</name>
    <dbReference type="NCBI Taxonomy" id="414684"/>
    <lineage>
        <taxon>Bacteria</taxon>
        <taxon>Pseudomonadati</taxon>
        <taxon>Pseudomonadota</taxon>
        <taxon>Alphaproteobacteria</taxon>
        <taxon>Rhodospirillales</taxon>
        <taxon>Rhodospirillaceae</taxon>
        <taxon>Rhodospirillum</taxon>
    </lineage>
</organism>
<keyword id="KW-0963">Cytoplasm</keyword>
<keyword id="KW-0489">Methyltransferase</keyword>
<keyword id="KW-1185">Reference proteome</keyword>
<keyword id="KW-0949">S-adenosyl-L-methionine</keyword>
<keyword id="KW-0808">Transferase</keyword>
<name>PIMT_RHOCS</name>
<sequence length="221" mass="24637">MSTAARKIRLLMLLRRNGVSDTGVLRAIEMIPREVFVPPTFHDQAYEDTALPIGHGQTISQPLVVGLMTQVLDLHDRLRVLEIGTGSGYQAAVLSRIVRRVYTIERHRPLLMEAERRFNTLRLHNITARLGDGMRGWPEAAPFERILVTAGGGAEPPADLVKQLAVGGVMVIPLGPDRREQRVVRLRRTESGLAREDLWPVRFVPLLPDVAPEAPRAERAS</sequence>
<protein>
    <recommendedName>
        <fullName evidence="1">Protein-L-isoaspartate O-methyltransferase</fullName>
        <ecNumber evidence="1">2.1.1.77</ecNumber>
    </recommendedName>
    <alternativeName>
        <fullName evidence="1">L-isoaspartyl protein carboxyl methyltransferase</fullName>
    </alternativeName>
    <alternativeName>
        <fullName evidence="1">Protein L-isoaspartyl methyltransferase</fullName>
    </alternativeName>
    <alternativeName>
        <fullName evidence="1">Protein-beta-aspartate methyltransferase</fullName>
        <shortName evidence="1">PIMT</shortName>
    </alternativeName>
</protein>